<proteinExistence type="inferred from homology"/>
<organismHost>
    <name type="scientific">Homo sapiens</name>
    <name type="common">Human</name>
    <dbReference type="NCBI Taxonomy" id="9606"/>
</organismHost>
<name>TRX2_HHV7M</name>
<evidence type="ECO:0000255" key="1">
    <source>
        <dbReference type="HAMAP-Rule" id="MF_04019"/>
    </source>
</evidence>
<dbReference type="EMBL" id="D32005">
    <property type="protein sequence ID" value="BAA06771.1"/>
    <property type="molecule type" value="Genomic_DNA"/>
</dbReference>
<dbReference type="RefSeq" id="YP_073798.1">
    <property type="nucleotide sequence ID" value="NC_001716.2"/>
</dbReference>
<dbReference type="SMR" id="P68322"/>
<dbReference type="DNASU" id="3289516"/>
<dbReference type="GeneID" id="3289516"/>
<dbReference type="KEGG" id="vg:3289516"/>
<dbReference type="GO" id="GO:0042025">
    <property type="term" value="C:host cell nucleus"/>
    <property type="evidence" value="ECO:0007669"/>
    <property type="project" value="UniProtKB-SubCell"/>
</dbReference>
<dbReference type="GO" id="GO:0019028">
    <property type="term" value="C:viral capsid"/>
    <property type="evidence" value="ECO:0007669"/>
    <property type="project" value="UniProtKB-KW"/>
</dbReference>
<dbReference type="GO" id="GO:0005198">
    <property type="term" value="F:structural molecule activity"/>
    <property type="evidence" value="ECO:0007669"/>
    <property type="project" value="InterPro"/>
</dbReference>
<dbReference type="HAMAP" id="MF_04019">
    <property type="entry name" value="HSV_TRX2"/>
    <property type="match status" value="1"/>
</dbReference>
<dbReference type="InterPro" id="IPR002690">
    <property type="entry name" value="Herpes_capsid_2"/>
</dbReference>
<dbReference type="Pfam" id="PF01802">
    <property type="entry name" value="Herpes_V23"/>
    <property type="match status" value="1"/>
</dbReference>
<reference key="1">
    <citation type="submission" date="1994-07" db="EMBL/GenBank/DDBJ databases">
        <authorList>
            <person name="Mukai T."/>
            <person name="Isegawa Y."/>
            <person name="Yamanishi K."/>
        </authorList>
    </citation>
    <scope>NUCLEOTIDE SEQUENCE [GENOMIC DNA]</scope>
</reference>
<sequence>MDSIYCTFDQKLTLSDIGTLCKLTNAVIPIPSHRHLIGNTNLGLYTVLSTTTDYIQIRDILKTMVLTILQKVEGNQLILIRPKIGHQYEIKNTGPFPLEKGDQLSLLPPFLKPSQQLLVLPNWELILPLLIPTDVATEINVRMLCISLLSIHRKYEEVQIIIDELRTLQYRDVTIKLPDVINDCKSTFSMKTACISFSMIATMAPDIVQTYIERLSLEDQSMLLIKCQELLAKKNFSQEPSSFKATEIKTELQKIKTVFTMINQINSLTQEKTFFIVADVSADNRLATCIFKE</sequence>
<gene>
    <name evidence="1" type="primary">TRX2</name>
    <name type="ordered locus">U56</name>
</gene>
<organism>
    <name type="scientific">Human herpesvirus 7 (strain MUK)</name>
    <name type="common">HHV-7</name>
    <name type="synonym">Human T lymphotropic virus</name>
    <dbReference type="NCBI Taxonomy" id="57279"/>
    <lineage>
        <taxon>Viruses</taxon>
        <taxon>Duplodnaviria</taxon>
        <taxon>Heunggongvirae</taxon>
        <taxon>Peploviricota</taxon>
        <taxon>Herviviricetes</taxon>
        <taxon>Herpesvirales</taxon>
        <taxon>Orthoherpesviridae</taxon>
        <taxon>Betaherpesvirinae</taxon>
        <taxon>Roseolovirus</taxon>
        <taxon>Roseolovirus humanbeta7</taxon>
        <taxon>Human betaherpesvirus 7</taxon>
    </lineage>
</organism>
<accession>P68322</accession>
<accession>P52350</accession>
<comment type="function">
    <text evidence="1">Structural component of the T=16 icosahedral capsid. The capsid is composed of pentamers and hexamers of major capsid protein/MCP, which are linked together by heterotrimers called triplexes. These triplexes are formed by a single molecule of triplex protein 1/TRX1 and two copies of triplex protein 2/TRX2. Additionally, TRX1 is required for efficient transport of TRX2 to the nucleus, which is the site of capsid assembly.</text>
</comment>
<comment type="subunit">
    <text evidence="1">Interacts with TRX1 and major capisd protein/MCP.</text>
</comment>
<comment type="subcellular location">
    <subcellularLocation>
        <location evidence="1">Virion</location>
    </subcellularLocation>
    <subcellularLocation>
        <location evidence="1">Host nucleus</location>
    </subcellularLocation>
</comment>
<comment type="similarity">
    <text evidence="1">Belongs to the herpesviridae TRX2 protein family.</text>
</comment>
<feature type="chain" id="PRO_0000115729" description="Triplex capsid protein 2">
    <location>
        <begin position="1"/>
        <end position="293"/>
    </location>
</feature>
<protein>
    <recommendedName>
        <fullName evidence="1">Triplex capsid protein 2</fullName>
    </recommendedName>
</protein>
<keyword id="KW-0167">Capsid protein</keyword>
<keyword id="KW-1048">Host nucleus</keyword>
<keyword id="KW-0946">Virion</keyword>